<sequence>MPAGEQEREYNEDRKYYSKGVKLVRKKKKIPGYSWGDIKINIIGEKDDSPIHFCDKCDLPIKIYGRIIPCKHAFCYNCANLYDKIGYKICPRCSYPVLRIEEHKRGSVFMCSVVQGCKRTYLSQKSLQAHIKRRHKRARKQVASASLEKLRPHIAPPRTEIAEIPKRLLDRDHLNYIPPEQHTMMSLPSMQQMPHEQHNQPHKDLQVPPPELSPSPPFPIQWETVSVFTRKHGNLIVDHIQNNSDSGAKKPSPPDYYPEYQSQPVVSSPCHIMPQKQHYAPPPSPSSPVNYPMPYPPQDVGTPNLVSSQAPALTTTYDLSLGYIIAQVPPYMNSPPPCAPQSQNGNSSASEFAFHHYNPNFLTQFTENQETLSPQFTQTDATDHRRWPAWKGLPPPPPTWSPPPSTLHGGSHHSYQRRHRPY</sequence>
<gene>
    <name type="primary">CBLL2</name>
    <name type="synonym">ZNF645</name>
    <name type="ORF">QtsA-19347</name>
</gene>
<name>CBLL2_MACFA</name>
<comment type="function">
    <text evidence="2">E3 ubiquitin ligase catalyzing the covalent attachment of ubiquitin moieties onto substrate proteins. May operate on tyrosine-phosphorylated SRC substrates.</text>
</comment>
<comment type="catalytic activity">
    <reaction evidence="2">
        <text>S-ubiquitinyl-[E2 ubiquitin-conjugating enzyme]-L-cysteine + [acceptor protein]-L-lysine = [E2 ubiquitin-conjugating enzyme]-L-cysteine + N(6)-ubiquitinyl-[acceptor protein]-L-lysine.</text>
        <dbReference type="EC" id="2.3.2.27"/>
    </reaction>
</comment>
<comment type="pathway">
    <text evidence="2">Protein modification; protein ubiquitination.</text>
</comment>
<comment type="subunit">
    <text evidence="3">Homodimer.</text>
</comment>
<comment type="subcellular location">
    <subcellularLocation>
        <location evidence="2">Cytoplasm</location>
    </subcellularLocation>
    <text evidence="2">Localized over the postacrosomal perinuclear theca region and the entire length of sperm tail.</text>
</comment>
<comment type="domain">
    <text evidence="3">The HYB domain forms a phosphotyrosine-binding pocket upon dimerization, and mediates as well the recognition of its flanking acidic amino acids.</text>
</comment>
<organism>
    <name type="scientific">Macaca fascicularis</name>
    <name type="common">Crab-eating macaque</name>
    <name type="synonym">Cynomolgus monkey</name>
    <dbReference type="NCBI Taxonomy" id="9541"/>
    <lineage>
        <taxon>Eukaryota</taxon>
        <taxon>Metazoa</taxon>
        <taxon>Chordata</taxon>
        <taxon>Craniata</taxon>
        <taxon>Vertebrata</taxon>
        <taxon>Euteleostomi</taxon>
        <taxon>Mammalia</taxon>
        <taxon>Eutheria</taxon>
        <taxon>Euarchontoglires</taxon>
        <taxon>Primates</taxon>
        <taxon>Haplorrhini</taxon>
        <taxon>Catarrhini</taxon>
        <taxon>Cercopithecidae</taxon>
        <taxon>Cercopithecinae</taxon>
        <taxon>Macaca</taxon>
    </lineage>
</organism>
<evidence type="ECO:0000250" key="1"/>
<evidence type="ECO:0000250" key="2">
    <source>
        <dbReference type="UniProtKB" id="Q8N7E2"/>
    </source>
</evidence>
<evidence type="ECO:0000250" key="3">
    <source>
        <dbReference type="UniProtKB" id="Q9JIY2"/>
    </source>
</evidence>
<evidence type="ECO:0000255" key="4">
    <source>
        <dbReference type="PROSITE-ProRule" id="PRU00042"/>
    </source>
</evidence>
<evidence type="ECO:0000255" key="5">
    <source>
        <dbReference type="PROSITE-ProRule" id="PRU00175"/>
    </source>
</evidence>
<evidence type="ECO:0000256" key="6">
    <source>
        <dbReference type="SAM" id="MobiDB-lite"/>
    </source>
</evidence>
<accession>Q4R361</accession>
<protein>
    <recommendedName>
        <fullName>E3 ubiquitin-protein ligase CBLL2</fullName>
        <ecNumber>2.3.2.27</ecNumber>
    </recommendedName>
    <alternativeName>
        <fullName>Cbl proto-oncogene-like protein 2</fullName>
    </alternativeName>
    <alternativeName>
        <fullName>E3 ubiquitin-protein ligase ZNF645</fullName>
    </alternativeName>
    <alternativeName>
        <fullName>RING-type E3 ubiquitin transferase ZNF645</fullName>
    </alternativeName>
    <alternativeName>
        <fullName>Zinc finger protein 645</fullName>
    </alternativeName>
    <alternativeName>
        <fullName>c-Cbl-like protein 2</fullName>
    </alternativeName>
</protein>
<feature type="chain" id="PRO_0000056317" description="E3 ubiquitin-protein ligase CBLL2">
    <location>
        <begin position="1"/>
        <end position="422"/>
    </location>
</feature>
<feature type="zinc finger region" description="RING-type" evidence="5">
    <location>
        <begin position="54"/>
        <end position="94"/>
    </location>
</feature>
<feature type="zinc finger region" description="C2H2-type" evidence="4">
    <location>
        <begin position="109"/>
        <end position="135"/>
    </location>
</feature>
<feature type="region of interest" description="HYB domain" evidence="1">
    <location>
        <begin position="93"/>
        <end position="151"/>
    </location>
</feature>
<feature type="region of interest" description="Disordered" evidence="6">
    <location>
        <begin position="190"/>
        <end position="213"/>
    </location>
</feature>
<feature type="region of interest" description="Disordered" evidence="6">
    <location>
        <begin position="378"/>
        <end position="422"/>
    </location>
</feature>
<feature type="compositionally biased region" description="Basic and acidic residues" evidence="6">
    <location>
        <begin position="195"/>
        <end position="205"/>
    </location>
</feature>
<feature type="compositionally biased region" description="Pro residues" evidence="6">
    <location>
        <begin position="393"/>
        <end position="405"/>
    </location>
</feature>
<feature type="compositionally biased region" description="Basic residues" evidence="6">
    <location>
        <begin position="410"/>
        <end position="422"/>
    </location>
</feature>
<keyword id="KW-0963">Cytoplasm</keyword>
<keyword id="KW-0479">Metal-binding</keyword>
<keyword id="KW-1185">Reference proteome</keyword>
<keyword id="KW-0808">Transferase</keyword>
<keyword id="KW-0833">Ubl conjugation pathway</keyword>
<keyword id="KW-0862">Zinc</keyword>
<keyword id="KW-0863">Zinc-finger</keyword>
<dbReference type="EC" id="2.3.2.27"/>
<dbReference type="EMBL" id="AB179407">
    <property type="protein sequence ID" value="BAE02458.1"/>
    <property type="molecule type" value="mRNA"/>
</dbReference>
<dbReference type="RefSeq" id="NP_001270666.1">
    <property type="nucleotide sequence ID" value="NM_001283737.1"/>
</dbReference>
<dbReference type="SMR" id="Q4R361"/>
<dbReference type="eggNOG" id="KOG2932">
    <property type="taxonomic scope" value="Eukaryota"/>
</dbReference>
<dbReference type="UniPathway" id="UPA00143"/>
<dbReference type="Proteomes" id="UP000233100">
    <property type="component" value="Unplaced"/>
</dbReference>
<dbReference type="GO" id="GO:0005737">
    <property type="term" value="C:cytoplasm"/>
    <property type="evidence" value="ECO:0007669"/>
    <property type="project" value="UniProtKB-SubCell"/>
</dbReference>
<dbReference type="GO" id="GO:0061630">
    <property type="term" value="F:ubiquitin protein ligase activity"/>
    <property type="evidence" value="ECO:0007669"/>
    <property type="project" value="InterPro"/>
</dbReference>
<dbReference type="GO" id="GO:0008270">
    <property type="term" value="F:zinc ion binding"/>
    <property type="evidence" value="ECO:0007669"/>
    <property type="project" value="UniProtKB-KW"/>
</dbReference>
<dbReference type="GO" id="GO:0016567">
    <property type="term" value="P:protein ubiquitination"/>
    <property type="evidence" value="ECO:0007669"/>
    <property type="project" value="UniProtKB-UniPathway"/>
</dbReference>
<dbReference type="GO" id="GO:0030155">
    <property type="term" value="P:regulation of cell adhesion"/>
    <property type="evidence" value="ECO:0007669"/>
    <property type="project" value="TreeGrafter"/>
</dbReference>
<dbReference type="CDD" id="cd16508">
    <property type="entry name" value="RING-HC_HAKAI-like"/>
    <property type="match status" value="1"/>
</dbReference>
<dbReference type="FunFam" id="6.10.140.2210:FF:000001">
    <property type="entry name" value="Putative e3 ubiquitin-protein ligase hakai"/>
    <property type="match status" value="1"/>
</dbReference>
<dbReference type="Gene3D" id="6.10.140.2210">
    <property type="match status" value="1"/>
</dbReference>
<dbReference type="Gene3D" id="3.30.40.10">
    <property type="entry name" value="Zinc/RING finger domain, C3HC4 (zinc finger)"/>
    <property type="match status" value="1"/>
</dbReference>
<dbReference type="InterPro" id="IPR040380">
    <property type="entry name" value="HAKAI-like_RING-HC"/>
</dbReference>
<dbReference type="InterPro" id="IPR040383">
    <property type="entry name" value="HAKAI/CBLL2"/>
</dbReference>
<dbReference type="InterPro" id="IPR013087">
    <property type="entry name" value="Znf_C2H2_type"/>
</dbReference>
<dbReference type="InterPro" id="IPR041042">
    <property type="entry name" value="Znf_Hakai"/>
</dbReference>
<dbReference type="InterPro" id="IPR001841">
    <property type="entry name" value="Znf_RING"/>
</dbReference>
<dbReference type="InterPro" id="IPR013083">
    <property type="entry name" value="Znf_RING/FYVE/PHD"/>
</dbReference>
<dbReference type="InterPro" id="IPR017907">
    <property type="entry name" value="Znf_RING_CS"/>
</dbReference>
<dbReference type="PANTHER" id="PTHR13480:SF1">
    <property type="entry name" value="E3 UBIQUITIN-PROTEIN LIGASE CBLL2"/>
    <property type="match status" value="1"/>
</dbReference>
<dbReference type="PANTHER" id="PTHR13480">
    <property type="entry name" value="E3 UBIQUITIN-PROTEIN LIGASE HAKAI-RELATED"/>
    <property type="match status" value="1"/>
</dbReference>
<dbReference type="Pfam" id="PF18408">
    <property type="entry name" value="zf_Hakai"/>
    <property type="match status" value="1"/>
</dbReference>
<dbReference type="SUPFAM" id="SSF57850">
    <property type="entry name" value="RING/U-box"/>
    <property type="match status" value="1"/>
</dbReference>
<dbReference type="PROSITE" id="PS00518">
    <property type="entry name" value="ZF_RING_1"/>
    <property type="match status" value="1"/>
</dbReference>
<dbReference type="PROSITE" id="PS50089">
    <property type="entry name" value="ZF_RING_2"/>
    <property type="match status" value="1"/>
</dbReference>
<dbReference type="PROSITE" id="PS50157">
    <property type="entry name" value="ZINC_FINGER_C2H2_2"/>
    <property type="match status" value="1"/>
</dbReference>
<reference key="1">
    <citation type="submission" date="2005-06" db="EMBL/GenBank/DDBJ databases">
        <title>DNA sequences of macaque genes expressed in brain or testis and its evolutionary implications.</title>
        <authorList>
            <consortium name="International consortium for macaque cDNA sequencing and analysis"/>
        </authorList>
    </citation>
    <scope>NUCLEOTIDE SEQUENCE [LARGE SCALE MRNA]</scope>
    <source>
        <tissue>Testis</tissue>
    </source>
</reference>
<proteinExistence type="evidence at transcript level"/>